<protein>
    <recommendedName>
        <fullName evidence="3">Putative melanoma-associated antigen 5P</fullName>
    </recommendedName>
    <alternativeName>
        <fullName>Cancer/testis antigen 1.5</fullName>
        <shortName>CT1.5</shortName>
    </alternativeName>
    <alternativeName>
        <fullName evidence="4">MAGE family member A5 pseudogene</fullName>
    </alternativeName>
    <alternativeName>
        <fullName>MAGE-5 antigen</fullName>
    </alternativeName>
</protein>
<gene>
    <name evidence="4" type="primary">MAGEA5P</name>
    <name evidence="4" type="synonym">MAGE5</name>
    <name evidence="4" type="synonym">MAGEA5</name>
</gene>
<keyword id="KW-1185">Reference proteome</keyword>
<keyword id="KW-0825">Tumor antigen</keyword>
<sequence length="124" mass="13016">MSLEQKSQHCKPEEGLDTQEEALGLVGVQAATTEEQEAVSSSSPLVPGTLGEVPAAGSPGPLKSPQGASAIPTAIDFTLWRQSIKGSSNQEEEGPSTSPDPESVFRAALSKKVADLIHFLLLKY</sequence>
<accession>P43359</accession>
<accession>Q32MD0</accession>
<reference key="1">
    <citation type="journal article" date="1994" name="Immunogenetics">
        <title>Structure, chromosomal localization, and expression of 12 genes of the MAGE family.</title>
        <authorList>
            <person name="De Plaen E."/>
            <person name="Arden K."/>
            <person name="Traversari C."/>
            <person name="Gaforio J.J."/>
            <person name="Szikora J.-P."/>
            <person name="De Smet C."/>
            <person name="Brasseur F."/>
            <person name="van der Bruggen P."/>
            <person name="Lethe B.G."/>
            <person name="Lurquin C."/>
            <person name="Brasseur R."/>
            <person name="Chomez P."/>
            <person name="de Backer O."/>
            <person name="Cavenee W."/>
            <person name="Boon T."/>
        </authorList>
    </citation>
    <scope>NUCLEOTIDE SEQUENCE [GENOMIC DNA]</scope>
</reference>
<reference key="2">
    <citation type="journal article" date="2004" name="Genome Res.">
        <title>The status, quality, and expansion of the NIH full-length cDNA project: the Mammalian Gene Collection (MGC).</title>
        <authorList>
            <consortium name="The MGC Project Team"/>
        </authorList>
    </citation>
    <scope>NUCLEOTIDE SEQUENCE [LARGE SCALE MRNA]</scope>
</reference>
<reference key="3">
    <citation type="journal article" date="2007" name="Cancer Res.">
        <title>MAGE-A, mMage-b, and MAGE-C proteins form complexes with KAP1 and suppress p53-dependent apoptosis in MAGE-positive cell lines.</title>
        <authorList>
            <person name="Yang B."/>
            <person name="O'Herrin S.M."/>
            <person name="Wu J."/>
            <person name="Reagan-Shaw S."/>
            <person name="Ma Y."/>
            <person name="Bhat K.M."/>
            <person name="Gravekamp C."/>
            <person name="Setaluri V."/>
            <person name="Peters N."/>
            <person name="Hoffmann F.M."/>
            <person name="Peng H."/>
            <person name="Ivanov A.V."/>
            <person name="Simpson A.J."/>
            <person name="Longley B.J."/>
        </authorList>
    </citation>
    <scope>FUNCTION</scope>
</reference>
<evidence type="ECO:0000256" key="1">
    <source>
        <dbReference type="SAM" id="MobiDB-lite"/>
    </source>
</evidence>
<evidence type="ECO:0000269" key="2">
    <source>
    </source>
</evidence>
<evidence type="ECO:0000305" key="3"/>
<evidence type="ECO:0000312" key="4">
    <source>
        <dbReference type="HGNC" id="HGNC:6803"/>
    </source>
</evidence>
<proteinExistence type="uncertain"/>
<dbReference type="EMBL" id="U10690">
    <property type="protein sequence ID" value="AAA68874.1"/>
    <property type="molecule type" value="Genomic_DNA"/>
</dbReference>
<dbReference type="EMBL" id="U10689">
    <property type="protein sequence ID" value="AAA68873.1"/>
    <property type="molecule type" value="Genomic_DNA"/>
</dbReference>
<dbReference type="EMBL" id="BC109187">
    <property type="protein sequence ID" value="AAI09188.1"/>
    <property type="molecule type" value="mRNA"/>
</dbReference>
<dbReference type="PIR" id="I38663">
    <property type="entry name" value="I38663"/>
</dbReference>
<dbReference type="RefSeq" id="NP_001191740.1">
    <property type="nucleotide sequence ID" value="NM_001204811.2"/>
</dbReference>
<dbReference type="RefSeq" id="NP_066387.1">
    <property type="nucleotide sequence ID" value="NM_021049.4"/>
</dbReference>
<dbReference type="SMR" id="P43359"/>
<dbReference type="iPTMnet" id="P43359"/>
<dbReference type="PhosphoSitePlus" id="P43359"/>
<dbReference type="BioMuta" id="HGNC:6803"/>
<dbReference type="DMDM" id="1170859"/>
<dbReference type="MassIVE" id="P43359"/>
<dbReference type="PeptideAtlas" id="P43359"/>
<dbReference type="DNASU" id="100533997"/>
<dbReference type="DNASU" id="4104"/>
<dbReference type="GeneID" id="100533997"/>
<dbReference type="KEGG" id="hsa:100533997"/>
<dbReference type="AGR" id="HGNC:6803"/>
<dbReference type="DisGeNET" id="4104"/>
<dbReference type="GeneCards" id="MAGEA5P"/>
<dbReference type="HGNC" id="HGNC:6803">
    <property type="gene designation" value="MAGEA5P"/>
</dbReference>
<dbReference type="MIM" id="300340">
    <property type="type" value="gene"/>
</dbReference>
<dbReference type="neXtProt" id="NX_P43359"/>
<dbReference type="InParanoid" id="P43359"/>
<dbReference type="PAN-GO" id="P43359">
    <property type="GO annotations" value="3 GO annotations based on evolutionary models"/>
</dbReference>
<dbReference type="PhylomeDB" id="P43359"/>
<dbReference type="PathwayCommons" id="P43359"/>
<dbReference type="BioGRID-ORCS" id="100533997">
    <property type="hits" value="8 hits in 186 CRISPR screens"/>
</dbReference>
<dbReference type="BioGRID-ORCS" id="4104">
    <property type="hits" value="2 hits in 158 CRISPR screens"/>
</dbReference>
<dbReference type="Pharos" id="P43359">
    <property type="development level" value="Tdark"/>
</dbReference>
<dbReference type="PRO" id="PR:P43359"/>
<dbReference type="Proteomes" id="UP000005640">
    <property type="component" value="Unplaced"/>
</dbReference>
<dbReference type="RNAct" id="P43359">
    <property type="molecule type" value="protein"/>
</dbReference>
<dbReference type="GO" id="GO:0051983">
    <property type="term" value="P:regulation of chromosome segregation"/>
    <property type="evidence" value="ECO:0000315"/>
    <property type="project" value="HGNC"/>
</dbReference>
<dbReference type="InterPro" id="IPR021072">
    <property type="entry name" value="MAGE_N"/>
</dbReference>
<dbReference type="Pfam" id="PF12440">
    <property type="entry name" value="MAGE_N"/>
    <property type="match status" value="1"/>
</dbReference>
<dbReference type="SMART" id="SM01392">
    <property type="entry name" value="MAGE_N"/>
    <property type="match status" value="1"/>
</dbReference>
<name>MAGA5_HUMAN</name>
<comment type="function">
    <text evidence="2">May negatively regulates apoptosis.</text>
</comment>
<comment type="tissue specificity">
    <text>Expressed in many tumors of several types, such as melanoma, head and neck squamous cell carcinoma, lung carcinoma and breast carcinoma, but not in normal tissues except for testes.</text>
</comment>
<comment type="caution">
    <text evidence="3">Could be the product of a pseudogene.</text>
</comment>
<feature type="chain" id="PRO_0000156705" description="Putative melanoma-associated antigen 5P">
    <location>
        <begin position="1"/>
        <end position="124"/>
    </location>
</feature>
<feature type="domain" description="MAGE">
    <location>
        <begin position="3"/>
        <end position="124"/>
    </location>
</feature>
<feature type="region of interest" description="Disordered" evidence="1">
    <location>
        <begin position="1"/>
        <end position="69"/>
    </location>
</feature>
<feature type="region of interest" description="Disordered" evidence="1">
    <location>
        <begin position="82"/>
        <end position="103"/>
    </location>
</feature>
<feature type="compositionally biased region" description="Basic and acidic residues" evidence="1">
    <location>
        <begin position="1"/>
        <end position="14"/>
    </location>
</feature>
<feature type="compositionally biased region" description="Polar residues" evidence="1">
    <location>
        <begin position="30"/>
        <end position="44"/>
    </location>
</feature>
<feature type="compositionally biased region" description="Polar residues" evidence="1">
    <location>
        <begin position="82"/>
        <end position="100"/>
    </location>
</feature>
<feature type="sequence variant" id="VAR_053492" description="In dbSNP:rs188387.">
    <original>Q</original>
    <variation>H</variation>
    <location>
        <position position="29"/>
    </location>
</feature>
<organism>
    <name type="scientific">Homo sapiens</name>
    <name type="common">Human</name>
    <dbReference type="NCBI Taxonomy" id="9606"/>
    <lineage>
        <taxon>Eukaryota</taxon>
        <taxon>Metazoa</taxon>
        <taxon>Chordata</taxon>
        <taxon>Craniata</taxon>
        <taxon>Vertebrata</taxon>
        <taxon>Euteleostomi</taxon>
        <taxon>Mammalia</taxon>
        <taxon>Eutheria</taxon>
        <taxon>Euarchontoglires</taxon>
        <taxon>Primates</taxon>
        <taxon>Haplorrhini</taxon>
        <taxon>Catarrhini</taxon>
        <taxon>Hominidae</taxon>
        <taxon>Homo</taxon>
    </lineage>
</organism>